<reference key="1">
    <citation type="journal article" date="2002" name="Nat. Biotechnol.">
        <title>Genome sequence of the dissimilatory metal ion-reducing bacterium Shewanella oneidensis.</title>
        <authorList>
            <person name="Heidelberg J.F."/>
            <person name="Paulsen I.T."/>
            <person name="Nelson K.E."/>
            <person name="Gaidos E.J."/>
            <person name="Nelson W.C."/>
            <person name="Read T.D."/>
            <person name="Eisen J.A."/>
            <person name="Seshadri R."/>
            <person name="Ward N.L."/>
            <person name="Methe B.A."/>
            <person name="Clayton R.A."/>
            <person name="Meyer T."/>
            <person name="Tsapin A."/>
            <person name="Scott J."/>
            <person name="Beanan M.J."/>
            <person name="Brinkac L.M."/>
            <person name="Daugherty S.C."/>
            <person name="DeBoy R.T."/>
            <person name="Dodson R.J."/>
            <person name="Durkin A.S."/>
            <person name="Haft D.H."/>
            <person name="Kolonay J.F."/>
            <person name="Madupu R."/>
            <person name="Peterson J.D."/>
            <person name="Umayam L.A."/>
            <person name="White O."/>
            <person name="Wolf A.M."/>
            <person name="Vamathevan J.J."/>
            <person name="Weidman J.F."/>
            <person name="Impraim M."/>
            <person name="Lee K."/>
            <person name="Berry K.J."/>
            <person name="Lee C."/>
            <person name="Mueller J."/>
            <person name="Khouri H.M."/>
            <person name="Gill J."/>
            <person name="Utterback T.R."/>
            <person name="McDonald L.A."/>
            <person name="Feldblyum T.V."/>
            <person name="Smith H.O."/>
            <person name="Venter J.C."/>
            <person name="Nealson K.H."/>
            <person name="Fraser C.M."/>
        </authorList>
    </citation>
    <scope>NUCLEOTIDE SEQUENCE [LARGE SCALE GENOMIC DNA]</scope>
    <source>
        <strain>ATCC 700550 / JCM 31522 / CIP 106686 / LMG 19005 / NCIMB 14063 / MR-1</strain>
    </source>
</reference>
<accession>Q8EF79</accession>
<comment type="function">
    <text evidence="1">Involved in the biosynthesis of osmoregulated periplasmic glucans (OPGs).</text>
</comment>
<comment type="pathway">
    <text>Glycan metabolism; osmoregulated periplasmic glucan (OPG) biosynthesis.</text>
</comment>
<comment type="subcellular location">
    <subcellularLocation>
        <location evidence="1">Periplasm</location>
    </subcellularLocation>
</comment>
<comment type="similarity">
    <text evidence="4">Belongs to the OpgD/OpgG family.</text>
</comment>
<protein>
    <recommendedName>
        <fullName>Glucans biosynthesis protein G 1</fullName>
    </recommendedName>
</protein>
<organism>
    <name type="scientific">Shewanella oneidensis (strain ATCC 700550 / JCM 31522 / CIP 106686 / LMG 19005 / NCIMB 14063 / MR-1)</name>
    <dbReference type="NCBI Taxonomy" id="211586"/>
    <lineage>
        <taxon>Bacteria</taxon>
        <taxon>Pseudomonadati</taxon>
        <taxon>Pseudomonadota</taxon>
        <taxon>Gammaproteobacteria</taxon>
        <taxon>Alteromonadales</taxon>
        <taxon>Shewanellaceae</taxon>
        <taxon>Shewanella</taxon>
    </lineage>
</organism>
<proteinExistence type="inferred from homology"/>
<keyword id="KW-0574">Periplasm</keyword>
<keyword id="KW-1185">Reference proteome</keyword>
<keyword id="KW-0732">Signal</keyword>
<dbReference type="EMBL" id="AE014299">
    <property type="protein sequence ID" value="AAN55154.2"/>
    <property type="molecule type" value="Genomic_DNA"/>
</dbReference>
<dbReference type="RefSeq" id="NP_717710.2">
    <property type="nucleotide sequence ID" value="NC_004347.2"/>
</dbReference>
<dbReference type="RefSeq" id="WP_011072170.1">
    <property type="nucleotide sequence ID" value="NC_004347.2"/>
</dbReference>
<dbReference type="SMR" id="Q8EF79"/>
<dbReference type="STRING" id="211586.SO_2107"/>
<dbReference type="PaxDb" id="211586-SO_2107"/>
<dbReference type="KEGG" id="son:SO_2107"/>
<dbReference type="PATRIC" id="fig|211586.12.peg.2023"/>
<dbReference type="eggNOG" id="COG3131">
    <property type="taxonomic scope" value="Bacteria"/>
</dbReference>
<dbReference type="HOGENOM" id="CLU_023403_2_0_6"/>
<dbReference type="OrthoDB" id="335750at2"/>
<dbReference type="PhylomeDB" id="Q8EF79"/>
<dbReference type="BioCyc" id="SONE211586:G1GMP-1937-MONOMER"/>
<dbReference type="UniPathway" id="UPA00637"/>
<dbReference type="Proteomes" id="UP000008186">
    <property type="component" value="Chromosome"/>
</dbReference>
<dbReference type="GO" id="GO:0030288">
    <property type="term" value="C:outer membrane-bounded periplasmic space"/>
    <property type="evidence" value="ECO:0000318"/>
    <property type="project" value="GO_Central"/>
</dbReference>
<dbReference type="GO" id="GO:0030246">
    <property type="term" value="F:carbohydrate binding"/>
    <property type="evidence" value="ECO:0007669"/>
    <property type="project" value="InterPro"/>
</dbReference>
<dbReference type="GO" id="GO:0003824">
    <property type="term" value="F:catalytic activity"/>
    <property type="evidence" value="ECO:0007669"/>
    <property type="project" value="InterPro"/>
</dbReference>
<dbReference type="GO" id="GO:0051274">
    <property type="term" value="P:beta-glucan biosynthetic process"/>
    <property type="evidence" value="ECO:0000318"/>
    <property type="project" value="GO_Central"/>
</dbReference>
<dbReference type="FunFam" id="2.60.40.10:FF:001915">
    <property type="entry name" value="Glucans biosynthesis protein G"/>
    <property type="match status" value="1"/>
</dbReference>
<dbReference type="FunFam" id="2.70.98.10:FF:000001">
    <property type="entry name" value="Glucans biosynthesis protein G"/>
    <property type="match status" value="1"/>
</dbReference>
<dbReference type="Gene3D" id="2.70.98.10">
    <property type="match status" value="1"/>
</dbReference>
<dbReference type="Gene3D" id="2.60.40.10">
    <property type="entry name" value="Immunoglobulins"/>
    <property type="match status" value="1"/>
</dbReference>
<dbReference type="HAMAP" id="MF_01069">
    <property type="entry name" value="MdoG_OpgG"/>
    <property type="match status" value="1"/>
</dbReference>
<dbReference type="InterPro" id="IPR011013">
    <property type="entry name" value="Gal_mutarotase_sf_dom"/>
</dbReference>
<dbReference type="InterPro" id="IPR014718">
    <property type="entry name" value="GH-type_carb-bd"/>
</dbReference>
<dbReference type="InterPro" id="IPR014438">
    <property type="entry name" value="Glucan_biosyn_MdoG/MdoD"/>
</dbReference>
<dbReference type="InterPro" id="IPR007444">
    <property type="entry name" value="Glucan_biosyn_MdoG_C"/>
</dbReference>
<dbReference type="InterPro" id="IPR013783">
    <property type="entry name" value="Ig-like_fold"/>
</dbReference>
<dbReference type="InterPro" id="IPR014756">
    <property type="entry name" value="Ig_E-set"/>
</dbReference>
<dbReference type="InterPro" id="IPR023704">
    <property type="entry name" value="MdoG_OpgG"/>
</dbReference>
<dbReference type="PANTHER" id="PTHR30504">
    <property type="entry name" value="GLUCANS BIOSYNTHESIS PROTEIN"/>
    <property type="match status" value="1"/>
</dbReference>
<dbReference type="PANTHER" id="PTHR30504:SF2">
    <property type="entry name" value="GLUCANS BIOSYNTHESIS PROTEIN G"/>
    <property type="match status" value="1"/>
</dbReference>
<dbReference type="Pfam" id="PF04349">
    <property type="entry name" value="MdoG"/>
    <property type="match status" value="1"/>
</dbReference>
<dbReference type="PIRSF" id="PIRSF006281">
    <property type="entry name" value="MdoG"/>
    <property type="match status" value="1"/>
</dbReference>
<dbReference type="SUPFAM" id="SSF81296">
    <property type="entry name" value="E set domains"/>
    <property type="match status" value="1"/>
</dbReference>
<dbReference type="SUPFAM" id="SSF74650">
    <property type="entry name" value="Galactose mutarotase-like"/>
    <property type="match status" value="1"/>
</dbReference>
<sequence>MVSLLRCQSFKPSSIICSLALSAAFALSGTAFADESKPAENKPATPVVSPPKATAPSANKTQVRFTKTGTFDGDSVVKLARKLASKPYVVLKDPMPAGLAKLTYDEYRDIRFNPVSSIWRDQGLPFQMQMFHRGFYFQDLIEIAIVEANQATHLAYEPKYFTAGEVITQALPNDDIGYSGFRIHNQLNTNGVFDELMVFQGASYFRALGKGNAYGLSARGLALKTADPEGEEFPIFRAFWVERPSYDSNLIVVHALLDSPSVAGAYRFSVRPGDNTQIDVEATLFPRVELSKVGLAPSTSMFLHSLNGRHDTDDFRPEVHDSDGLLMFNGRGEHLWRPLANPRQLQVSAFSDNSPQGFGLIQRERNYASYQDLEAQYERRPSLWIEPVGNWGQGAVVLTEIPTESEIHDNIVSFWKPRQPIPAGSEYHFAYRMSWGDEPVAKTNSVVVSRTASGRADIAKATPRRLFVVDYHLNGTMPDELPLAKVESSGGVISNVVIARNAANNGYRLAFELEPEDKDLIELRAELKFSTPRQVETWLYRWTL</sequence>
<evidence type="ECO:0000250" key="1"/>
<evidence type="ECO:0000255" key="2"/>
<evidence type="ECO:0000256" key="3">
    <source>
        <dbReference type="SAM" id="MobiDB-lite"/>
    </source>
</evidence>
<evidence type="ECO:0000305" key="4"/>
<gene>
    <name type="primary">opgG1</name>
    <name type="synonym">mdoG-1</name>
    <name type="ordered locus">SO_2107</name>
</gene>
<name>OPGG1_SHEON</name>
<feature type="signal peptide" evidence="2">
    <location>
        <begin position="1"/>
        <end position="33"/>
    </location>
</feature>
<feature type="chain" id="PRO_0000020234" description="Glucans biosynthesis protein G 1">
    <location>
        <begin position="34"/>
        <end position="544"/>
    </location>
</feature>
<feature type="region of interest" description="Disordered" evidence="3">
    <location>
        <begin position="36"/>
        <end position="58"/>
    </location>
</feature>